<name>WZB_ECOLI</name>
<comment type="function">
    <text evidence="2 3 4">Dephosphorylates Wzc (PubMed:10348860). Required for the extracellular polysaccharide colanic acid synthesis, probably involved in the export of colanic acid from the cell to medium (PubMed:11090276). Involved in protection of cells against contact-dependent growth inhibition (CDI), probably due to the loss of a physical impediment to cell-cell contact.</text>
</comment>
<comment type="catalytic activity">
    <reaction evidence="2">
        <text>O-phospho-L-tyrosyl-[protein] + H2O = L-tyrosyl-[protein] + phosphate</text>
        <dbReference type="Rhea" id="RHEA:10684"/>
        <dbReference type="Rhea" id="RHEA-COMP:10136"/>
        <dbReference type="Rhea" id="RHEA-COMP:20101"/>
        <dbReference type="ChEBI" id="CHEBI:15377"/>
        <dbReference type="ChEBI" id="CHEBI:43474"/>
        <dbReference type="ChEBI" id="CHEBI:46858"/>
        <dbReference type="ChEBI" id="CHEBI:61978"/>
        <dbReference type="EC" id="3.1.3.48"/>
    </reaction>
</comment>
<comment type="pathway">
    <text>Glycan metabolism; exopolysaccharide biosynthesis.</text>
</comment>
<comment type="disruption phenotype">
    <text evidence="3 4">No phosphorylation of Wzc (PubMed:11090276). Loss of mucoid colony phenotype, greatly increased susceptibility to contact-dependent growth inhibition (CDI) (PubMed:18761695).</text>
</comment>
<comment type="similarity">
    <text evidence="5">Belongs to the low molecular weight phosphotyrosine protein phosphatase family.</text>
</comment>
<organism>
    <name type="scientific">Escherichia coli (strain K12)</name>
    <dbReference type="NCBI Taxonomy" id="83333"/>
    <lineage>
        <taxon>Bacteria</taxon>
        <taxon>Pseudomonadati</taxon>
        <taxon>Pseudomonadota</taxon>
        <taxon>Gammaproteobacteria</taxon>
        <taxon>Enterobacterales</taxon>
        <taxon>Enterobacteriaceae</taxon>
        <taxon>Escherichia</taxon>
    </lineage>
</organism>
<evidence type="ECO:0000250" key="1">
    <source>
        <dbReference type="UniProtKB" id="P11064"/>
    </source>
</evidence>
<evidence type="ECO:0000269" key="2">
    <source>
    </source>
</evidence>
<evidence type="ECO:0000269" key="3">
    <source>
    </source>
</evidence>
<evidence type="ECO:0000269" key="4">
    <source>
    </source>
</evidence>
<evidence type="ECO:0000305" key="5"/>
<evidence type="ECO:0007829" key="6">
    <source>
        <dbReference type="PDB" id="2FEK"/>
    </source>
</evidence>
<keyword id="KW-0002">3D-structure</keyword>
<keyword id="KW-0270">Exopolysaccharide synthesis</keyword>
<keyword id="KW-0378">Hydrolase</keyword>
<keyword id="KW-0904">Protein phosphatase</keyword>
<keyword id="KW-1185">Reference proteome</keyword>
<accession>P0AAB2</accession>
<accession>P77153</accession>
<accession>Q2MAY1</accession>
<gene>
    <name type="primary">wzb</name>
    <name type="ordered locus">b2061</name>
    <name type="ordered locus">JW2046</name>
</gene>
<protein>
    <recommendedName>
        <fullName>Low molecular weight protein-tyrosine-phosphatase Wzb</fullName>
        <ecNumber evidence="2">3.1.3.48</ecNumber>
    </recommendedName>
</protein>
<feature type="chain" id="PRO_0000046572" description="Low molecular weight protein-tyrosine-phosphatase Wzb">
    <location>
        <begin position="1"/>
        <end position="147"/>
    </location>
</feature>
<feature type="active site" description="Nucleophile" evidence="1">
    <location>
        <position position="9"/>
    </location>
</feature>
<feature type="active site" evidence="1">
    <location>
        <position position="15"/>
    </location>
</feature>
<feature type="active site" description="Proton donor" evidence="1">
    <location>
        <position position="115"/>
    </location>
</feature>
<feature type="strand" evidence="6">
    <location>
        <begin position="4"/>
        <end position="14"/>
    </location>
</feature>
<feature type="helix" evidence="6">
    <location>
        <begin position="15"/>
        <end position="26"/>
    </location>
</feature>
<feature type="strand" evidence="6">
    <location>
        <begin position="31"/>
        <end position="36"/>
    </location>
</feature>
<feature type="helix" evidence="6">
    <location>
        <begin position="47"/>
        <end position="55"/>
    </location>
</feature>
<feature type="helix" evidence="6">
    <location>
        <begin position="70"/>
        <end position="75"/>
    </location>
</feature>
<feature type="strand" evidence="6">
    <location>
        <begin position="76"/>
        <end position="82"/>
    </location>
</feature>
<feature type="helix" evidence="6">
    <location>
        <begin position="84"/>
        <end position="93"/>
    </location>
</feature>
<feature type="helix" evidence="6">
    <location>
        <begin position="95"/>
        <end position="100"/>
    </location>
</feature>
<feature type="strand" evidence="6">
    <location>
        <begin position="101"/>
        <end position="103"/>
    </location>
</feature>
<feature type="helix" evidence="6">
    <location>
        <begin position="104"/>
        <end position="107"/>
    </location>
</feature>
<feature type="turn" evidence="6">
    <location>
        <begin position="108"/>
        <end position="110"/>
    </location>
</feature>
<feature type="helix" evidence="6">
    <location>
        <begin position="121"/>
        <end position="143"/>
    </location>
</feature>
<proteinExistence type="evidence at protein level"/>
<dbReference type="EC" id="3.1.3.48" evidence="2"/>
<dbReference type="EMBL" id="U38473">
    <property type="protein sequence ID" value="AAC77834.1"/>
    <property type="molecule type" value="Genomic_DNA"/>
</dbReference>
<dbReference type="EMBL" id="U00096">
    <property type="protein sequence ID" value="AAC75122.1"/>
    <property type="molecule type" value="Genomic_DNA"/>
</dbReference>
<dbReference type="EMBL" id="AP009048">
    <property type="protein sequence ID" value="BAE76575.1"/>
    <property type="molecule type" value="Genomic_DNA"/>
</dbReference>
<dbReference type="PIR" id="D64972">
    <property type="entry name" value="D64972"/>
</dbReference>
<dbReference type="RefSeq" id="NP_416565.1">
    <property type="nucleotide sequence ID" value="NC_000913.3"/>
</dbReference>
<dbReference type="RefSeq" id="WP_000482901.1">
    <property type="nucleotide sequence ID" value="NZ_STEB01000002.1"/>
</dbReference>
<dbReference type="PDB" id="2FEK">
    <property type="method" value="NMR"/>
    <property type="chains" value="A=1-147"/>
</dbReference>
<dbReference type="PDBsum" id="2FEK"/>
<dbReference type="BMRB" id="P0AAB2"/>
<dbReference type="SMR" id="P0AAB2"/>
<dbReference type="BioGRID" id="4260957">
    <property type="interactions" value="440"/>
</dbReference>
<dbReference type="FunCoup" id="P0AAB2">
    <property type="interactions" value="685"/>
</dbReference>
<dbReference type="IntAct" id="P0AAB2">
    <property type="interactions" value="17"/>
</dbReference>
<dbReference type="MINT" id="P0AAB2"/>
<dbReference type="STRING" id="511145.b2061"/>
<dbReference type="PaxDb" id="511145-b2061"/>
<dbReference type="EnsemblBacteria" id="AAC75122">
    <property type="protein sequence ID" value="AAC75122"/>
    <property type="gene ID" value="b2061"/>
</dbReference>
<dbReference type="GeneID" id="93775130"/>
<dbReference type="GeneID" id="946564"/>
<dbReference type="KEGG" id="ecj:JW2046"/>
<dbReference type="KEGG" id="eco:b2061"/>
<dbReference type="KEGG" id="ecoc:C3026_11595"/>
<dbReference type="PATRIC" id="fig|511145.12.peg.2138"/>
<dbReference type="EchoBASE" id="EB3337"/>
<dbReference type="eggNOG" id="COG0394">
    <property type="taxonomic scope" value="Bacteria"/>
</dbReference>
<dbReference type="HOGENOM" id="CLU_071415_1_1_6"/>
<dbReference type="InParanoid" id="P0AAB2"/>
<dbReference type="OMA" id="YQQVTRF"/>
<dbReference type="OrthoDB" id="9784339at2"/>
<dbReference type="PhylomeDB" id="P0AAB2"/>
<dbReference type="BioCyc" id="EcoCyc:G7106-MONOMER"/>
<dbReference type="BioCyc" id="MetaCyc:G7106-MONOMER"/>
<dbReference type="UniPathway" id="UPA00631"/>
<dbReference type="EvolutionaryTrace" id="P0AAB2"/>
<dbReference type="PRO" id="PR:P0AAB2"/>
<dbReference type="Proteomes" id="UP000000625">
    <property type="component" value="Chromosome"/>
</dbReference>
<dbReference type="GO" id="GO:0004725">
    <property type="term" value="F:protein tyrosine phosphatase activity"/>
    <property type="evidence" value="ECO:0000314"/>
    <property type="project" value="EcoCyc"/>
</dbReference>
<dbReference type="GO" id="GO:0009242">
    <property type="term" value="P:colanic acid biosynthetic process"/>
    <property type="evidence" value="ECO:0000315"/>
    <property type="project" value="EcoCyc"/>
</dbReference>
<dbReference type="GO" id="GO:0000271">
    <property type="term" value="P:polysaccharide biosynthetic process"/>
    <property type="evidence" value="ECO:0007669"/>
    <property type="project" value="UniProtKB-KW"/>
</dbReference>
<dbReference type="CDD" id="cd16343">
    <property type="entry name" value="LMWPTP"/>
    <property type="match status" value="1"/>
</dbReference>
<dbReference type="FunFam" id="3.40.50.2300:FF:000041">
    <property type="entry name" value="Low molecular weight protein-tyrosine-phosphatase"/>
    <property type="match status" value="1"/>
</dbReference>
<dbReference type="Gene3D" id="3.40.50.2300">
    <property type="match status" value="1"/>
</dbReference>
<dbReference type="InterPro" id="IPR050438">
    <property type="entry name" value="LMW_PTPase"/>
</dbReference>
<dbReference type="InterPro" id="IPR023485">
    <property type="entry name" value="Ptyr_pPase"/>
</dbReference>
<dbReference type="InterPro" id="IPR036196">
    <property type="entry name" value="Ptyr_pPase_sf"/>
</dbReference>
<dbReference type="InterPro" id="IPR017867">
    <property type="entry name" value="Tyr_phospatase_low_mol_wt"/>
</dbReference>
<dbReference type="NCBIfam" id="NF007520">
    <property type="entry name" value="PRK10126.1"/>
    <property type="match status" value="1"/>
</dbReference>
<dbReference type="PANTHER" id="PTHR11717">
    <property type="entry name" value="LOW MOLECULAR WEIGHT PROTEIN TYROSINE PHOSPHATASE"/>
    <property type="match status" value="1"/>
</dbReference>
<dbReference type="PANTHER" id="PTHR11717:SF31">
    <property type="entry name" value="LOW MOLECULAR WEIGHT PROTEIN-TYROSINE-PHOSPHATASE ETP-RELATED"/>
    <property type="match status" value="1"/>
</dbReference>
<dbReference type="Pfam" id="PF01451">
    <property type="entry name" value="LMWPc"/>
    <property type="match status" value="1"/>
</dbReference>
<dbReference type="PRINTS" id="PR00719">
    <property type="entry name" value="LMWPTPASE"/>
</dbReference>
<dbReference type="SMART" id="SM00226">
    <property type="entry name" value="LMWPc"/>
    <property type="match status" value="1"/>
</dbReference>
<dbReference type="SUPFAM" id="SSF52788">
    <property type="entry name" value="Phosphotyrosine protein phosphatases I"/>
    <property type="match status" value="1"/>
</dbReference>
<reference key="1">
    <citation type="journal article" date="1996" name="J. Bacteriol.">
        <title>Organization of the Escherichia coli K-12 gene cluster responsible for production of the extracellular polysaccharide colanic acid.</title>
        <authorList>
            <person name="Stevenson G."/>
            <person name="Andrianopoulos K."/>
            <person name="Hobbs M."/>
            <person name="Reeves P.R."/>
        </authorList>
    </citation>
    <scope>NUCLEOTIDE SEQUENCE [GENOMIC DNA]</scope>
    <source>
        <strain>K12</strain>
    </source>
</reference>
<reference key="2">
    <citation type="journal article" date="1997" name="Science">
        <title>The complete genome sequence of Escherichia coli K-12.</title>
        <authorList>
            <person name="Blattner F.R."/>
            <person name="Plunkett G. III"/>
            <person name="Bloch C.A."/>
            <person name="Perna N.T."/>
            <person name="Burland V."/>
            <person name="Riley M."/>
            <person name="Collado-Vides J."/>
            <person name="Glasner J.D."/>
            <person name="Rode C.K."/>
            <person name="Mayhew G.F."/>
            <person name="Gregor J."/>
            <person name="Davis N.W."/>
            <person name="Kirkpatrick H.A."/>
            <person name="Goeden M.A."/>
            <person name="Rose D.J."/>
            <person name="Mau B."/>
            <person name="Shao Y."/>
        </authorList>
    </citation>
    <scope>NUCLEOTIDE SEQUENCE [LARGE SCALE GENOMIC DNA]</scope>
    <source>
        <strain>K12 / MG1655 / ATCC 47076</strain>
    </source>
</reference>
<reference key="3">
    <citation type="journal article" date="2006" name="Mol. Syst. Biol.">
        <title>Highly accurate genome sequences of Escherichia coli K-12 strains MG1655 and W3110.</title>
        <authorList>
            <person name="Hayashi K."/>
            <person name="Morooka N."/>
            <person name="Yamamoto Y."/>
            <person name="Fujita K."/>
            <person name="Isono K."/>
            <person name="Choi S."/>
            <person name="Ohtsubo E."/>
            <person name="Baba T."/>
            <person name="Wanner B.L."/>
            <person name="Mori H."/>
            <person name="Horiuchi T."/>
        </authorList>
    </citation>
    <scope>NUCLEOTIDE SEQUENCE [LARGE SCALE GENOMIC DNA]</scope>
    <source>
        <strain>K12 / W3110 / ATCC 27325 / DSM 5911</strain>
    </source>
</reference>
<reference key="4">
    <citation type="journal article" date="1999" name="J. Bacteriol.">
        <title>Cells of Escherichia coli contain a protein-tyrosine kinase, Wzc, and a phosphotyrosine-protein phosphatase, Wzb.</title>
        <authorList>
            <person name="Vincent C."/>
            <person name="Doublet P."/>
            <person name="Grangeasse C."/>
            <person name="Vaganay E."/>
            <person name="Cozzone A.J."/>
            <person name="Duclos B."/>
        </authorList>
    </citation>
    <scope>FUNCTION</scope>
    <scope>CATALYTIC ACTIVITY</scope>
    <source>
        <strain>K12 / JM109 / ATCC 53323</strain>
    </source>
</reference>
<reference key="5">
    <citation type="journal article" date="2000" name="J. Mol. Biol.">
        <title>Relationship between exopolysaccharide production and protein-tyrosine phosphorylation in Gram-negative bacteria.</title>
        <authorList>
            <person name="Vincent C."/>
            <person name="Duclos B."/>
            <person name="Grangeasse C."/>
            <person name="Vaganay E."/>
            <person name="Riberty M."/>
            <person name="Cozzone A.J."/>
            <person name="Doublet P."/>
        </authorList>
    </citation>
    <scope>FUNCTION</scope>
    <scope>DISRUPTION PHENOTYPE</scope>
    <source>
        <strain>K12 / JM109 / ATCC 53323</strain>
    </source>
</reference>
<reference key="6">
    <citation type="journal article" date="2008" name="Mol. Microbiol.">
        <title>Contact-dependent growth inhibition requires the essential outer membrane protein BamA (YaeT) as the receptor and the inner membrane transport protein AcrB.</title>
        <authorList>
            <person name="Aoki S.K."/>
            <person name="Malinverni J.C."/>
            <person name="Jacoby K."/>
            <person name="Thomas B."/>
            <person name="Pamma R."/>
            <person name="Trinh B.N."/>
            <person name="Remers S."/>
            <person name="Webb J."/>
            <person name="Braaten B.A."/>
            <person name="Silhavy T.J."/>
            <person name="Low D.A."/>
        </authorList>
    </citation>
    <scope>FUNCTION</scope>
    <scope>DISRUPTION PHENOTYPE</scope>
    <source>
        <strain>K12 / MC1061</strain>
        <strain>K12 / MC4100</strain>
    </source>
</reference>
<sequence>MFNNILVVCVGNICRSPTAERLLQRYHPELKVESAGLGALVGKGADPTAISVAAEHQLSLEGHCARQISRRLCRNYDLILTMEKRHIERLCEMAPEMRGKVMLFGHWDNECEIPDPYRKSRETFAAVYTLLERSARQWAQALNAEQV</sequence>